<evidence type="ECO:0000250" key="1">
    <source>
        <dbReference type="UniProtKB" id="P38571"/>
    </source>
</evidence>
<evidence type="ECO:0000250" key="2">
    <source>
        <dbReference type="UniProtKB" id="Q64194"/>
    </source>
</evidence>
<evidence type="ECO:0000255" key="3"/>
<evidence type="ECO:0000255" key="4">
    <source>
        <dbReference type="PROSITE-ProRule" id="PRU10037"/>
    </source>
</evidence>
<evidence type="ECO:0000305" key="5"/>
<organism>
    <name type="scientific">Macaca fascicularis</name>
    <name type="common">Crab-eating macaque</name>
    <name type="synonym">Cynomolgus monkey</name>
    <dbReference type="NCBI Taxonomy" id="9541"/>
    <lineage>
        <taxon>Eukaryota</taxon>
        <taxon>Metazoa</taxon>
        <taxon>Chordata</taxon>
        <taxon>Craniata</taxon>
        <taxon>Vertebrata</taxon>
        <taxon>Euteleostomi</taxon>
        <taxon>Mammalia</taxon>
        <taxon>Eutheria</taxon>
        <taxon>Euarchontoglires</taxon>
        <taxon>Primates</taxon>
        <taxon>Haplorrhini</taxon>
        <taxon>Catarrhini</taxon>
        <taxon>Cercopithecidae</taxon>
        <taxon>Cercopithecinae</taxon>
        <taxon>Macaca</taxon>
    </lineage>
</organism>
<name>LICH_MACFA</name>
<sequence>MKMRFLGLVVCLVLWTLHSEASGGKLTAVNPETNMNVSEIISYWGFPSEEYLVETEDGYILCLNRIPHGRKNHSDKGPKPVVFLQHGLLADSSNWVTNLANSSLGFILADAGFDVWMGNSRGNTWSRKHKTLSVSQDEFWAFSYDEMAKYDLPASINFILNKTGQEQVYYVGHSQGTTIGFIAFSQIPELAKRIKMFFALAPVVSVDFCTSPMAKLGRLPDLLIKDLFGDKEFLPQSAFLKWLGTHVCTHVILKELCGNLCFLLCGFNERNLNMSRVDVYTTHSPAGTSVQNMLHWSQAVKFQKFQAFDWGSSAKNYFHYNQSYPPTYNVKDMLVPTAVWSGGHDWLADVYDINILLTQITNLVFHESIPEWEHLDFIWGLDAPWRLYNKIINLMKKYQ</sequence>
<keyword id="KW-0325">Glycoprotein</keyword>
<keyword id="KW-0378">Hydrolase</keyword>
<keyword id="KW-0442">Lipid degradation</keyword>
<keyword id="KW-0443">Lipid metabolism</keyword>
<keyword id="KW-0458">Lysosome</keyword>
<keyword id="KW-1185">Reference proteome</keyword>
<keyword id="KW-0732">Signal</keyword>
<comment type="function">
    <text evidence="1">Catalyzes the deacylation of cholesteryl ester core lipids of endocytosed low density lipoproteins to generate free fatty acids and cholesterol. Hydrolyzes triglycerides (1,2,3-triacylglycerol) and diglycerides (such as 1,2-diacylglycerol and 1,3-diacylglycerol) with preference for the acyl moieties at the sn-1 or sn-3 positions.</text>
</comment>
<comment type="catalytic activity">
    <reaction evidence="1">
        <text>a sterol ester + H2O = a sterol + a fatty acid + H(+)</text>
        <dbReference type="Rhea" id="RHEA:10100"/>
        <dbReference type="ChEBI" id="CHEBI:15377"/>
        <dbReference type="ChEBI" id="CHEBI:15378"/>
        <dbReference type="ChEBI" id="CHEBI:15889"/>
        <dbReference type="ChEBI" id="CHEBI:28868"/>
        <dbReference type="ChEBI" id="CHEBI:35915"/>
        <dbReference type="EC" id="3.1.1.13"/>
    </reaction>
</comment>
<comment type="catalytic activity">
    <reaction evidence="1">
        <text>cholesteryl (9Z-octadecenoate) + H2O = cholesterol + (9Z)-octadecenoate + H(+)</text>
        <dbReference type="Rhea" id="RHEA:33875"/>
        <dbReference type="ChEBI" id="CHEBI:15377"/>
        <dbReference type="ChEBI" id="CHEBI:15378"/>
        <dbReference type="ChEBI" id="CHEBI:16113"/>
        <dbReference type="ChEBI" id="CHEBI:30823"/>
        <dbReference type="ChEBI" id="CHEBI:46898"/>
    </reaction>
    <physiologicalReaction direction="left-to-right" evidence="1">
        <dbReference type="Rhea" id="RHEA:33876"/>
    </physiologicalReaction>
</comment>
<comment type="catalytic activity">
    <reaction evidence="1">
        <text>a triacylglycerol + H2O = a 1,2-diacylglycerol + a fatty acid + H(+)</text>
        <dbReference type="Rhea" id="RHEA:35667"/>
        <dbReference type="ChEBI" id="CHEBI:15377"/>
        <dbReference type="ChEBI" id="CHEBI:15378"/>
        <dbReference type="ChEBI" id="CHEBI:17855"/>
        <dbReference type="ChEBI" id="CHEBI:28868"/>
        <dbReference type="ChEBI" id="CHEBI:49172"/>
    </reaction>
    <physiologicalReaction direction="left-to-right" evidence="1">
        <dbReference type="Rhea" id="RHEA:35668"/>
    </physiologicalReaction>
</comment>
<comment type="catalytic activity">
    <reaction evidence="1">
        <text>1,2-di-(9Z-octadecenoyl)-glycerol + (9Z)-octadecenoate + H(+) = 1,2,3-tri-(9Z-octadecenoyl)-glycerol + H2O</text>
        <dbReference type="Rhea" id="RHEA:38379"/>
        <dbReference type="ChEBI" id="CHEBI:15377"/>
        <dbReference type="ChEBI" id="CHEBI:15378"/>
        <dbReference type="ChEBI" id="CHEBI:30823"/>
        <dbReference type="ChEBI" id="CHEBI:52323"/>
        <dbReference type="ChEBI" id="CHEBI:53753"/>
    </reaction>
    <physiologicalReaction direction="right-to-left" evidence="1">
        <dbReference type="Rhea" id="RHEA:38381"/>
    </physiologicalReaction>
</comment>
<comment type="catalytic activity">
    <reaction evidence="1">
        <text>a 1,2-diacylglycerol + H2O = a 1-acylglycerol + a fatty acid + H(+)</text>
        <dbReference type="Rhea" id="RHEA:44712"/>
        <dbReference type="ChEBI" id="CHEBI:15377"/>
        <dbReference type="ChEBI" id="CHEBI:15378"/>
        <dbReference type="ChEBI" id="CHEBI:28868"/>
        <dbReference type="ChEBI" id="CHEBI:35759"/>
        <dbReference type="ChEBI" id="CHEBI:49172"/>
    </reaction>
    <physiologicalReaction direction="left-to-right" evidence="1">
        <dbReference type="Rhea" id="RHEA:44713"/>
    </physiologicalReaction>
</comment>
<comment type="catalytic activity">
    <reaction evidence="1">
        <text>1,2-di-(9Z-octadecenoyl)-glycerol + H2O = 1-(9Z-octadecenoyl)-glycerol + (9Z)-octadecenoate + H(+)</text>
        <dbReference type="Rhea" id="RHEA:40967"/>
        <dbReference type="ChEBI" id="CHEBI:15377"/>
        <dbReference type="ChEBI" id="CHEBI:15378"/>
        <dbReference type="ChEBI" id="CHEBI:30823"/>
        <dbReference type="ChEBI" id="CHEBI:52323"/>
        <dbReference type="ChEBI" id="CHEBI:75342"/>
    </reaction>
    <physiologicalReaction direction="left-to-right" evidence="1">
        <dbReference type="Rhea" id="RHEA:40968"/>
    </physiologicalReaction>
</comment>
<comment type="catalytic activity">
    <reaction evidence="1">
        <text>a 1,3-diacylglycerol + H2O = a 1-acylglycerol + a fatty acid + H(+)</text>
        <dbReference type="Rhea" id="RHEA:78019"/>
        <dbReference type="ChEBI" id="CHEBI:15377"/>
        <dbReference type="ChEBI" id="CHEBI:15378"/>
        <dbReference type="ChEBI" id="CHEBI:28868"/>
        <dbReference type="ChEBI" id="CHEBI:35759"/>
        <dbReference type="ChEBI" id="CHEBI:47777"/>
    </reaction>
    <physiologicalReaction direction="left-to-right" evidence="1">
        <dbReference type="Rhea" id="RHEA:78020"/>
    </physiologicalReaction>
</comment>
<comment type="catalytic activity">
    <reaction evidence="1">
        <text>1,3-di-(9Z-octadecenoyl)-glycerol + H2O = 1-(9Z-octadecenoyl)-glycerol + (9Z)-octadecenoate + H(+)</text>
        <dbReference type="Rhea" id="RHEA:39939"/>
        <dbReference type="ChEBI" id="CHEBI:15377"/>
        <dbReference type="ChEBI" id="CHEBI:15378"/>
        <dbReference type="ChEBI" id="CHEBI:30823"/>
        <dbReference type="ChEBI" id="CHEBI:75342"/>
        <dbReference type="ChEBI" id="CHEBI:75735"/>
    </reaction>
    <physiologicalReaction direction="left-to-right" evidence="1">
        <dbReference type="Rhea" id="RHEA:39940"/>
    </physiologicalReaction>
</comment>
<comment type="subunit">
    <text evidence="1">Monomer.</text>
</comment>
<comment type="subcellular location">
    <subcellularLocation>
        <location evidence="2">Lysosome</location>
    </subcellularLocation>
</comment>
<comment type="PTM">
    <text evidence="1">Glycosylation is not essential for catalytic activity.</text>
</comment>
<comment type="similarity">
    <text evidence="5">Belongs to the AB hydrolase superfamily. Lipase family.</text>
</comment>
<proteinExistence type="evidence at transcript level"/>
<reference key="1">
    <citation type="submission" date="2005-06" db="EMBL/GenBank/DDBJ databases">
        <title>DNA sequences of macaque genes expressed in brain or testis and its evolutionary implications.</title>
        <authorList>
            <consortium name="International consortium for macaque cDNA sequencing and analysis"/>
        </authorList>
    </citation>
    <scope>NUCLEOTIDE SEQUENCE [LARGE SCALE MRNA]</scope>
    <source>
        <tissue>Frontal cortex</tissue>
    </source>
</reference>
<dbReference type="EC" id="3.1.1.13" evidence="1"/>
<dbReference type="EMBL" id="AB169819">
    <property type="protein sequence ID" value="BAE01900.1"/>
    <property type="molecule type" value="mRNA"/>
</dbReference>
<dbReference type="SMR" id="Q4R4S5"/>
<dbReference type="STRING" id="9541.ENSMFAP00000022072"/>
<dbReference type="ESTHER" id="macfa-q4r4s5">
    <property type="family name" value="Acidic_Lipase"/>
</dbReference>
<dbReference type="GlyCosmos" id="Q4R4S5">
    <property type="glycosylation" value="6 sites, No reported glycans"/>
</dbReference>
<dbReference type="eggNOG" id="KOG2624">
    <property type="taxonomic scope" value="Eukaryota"/>
</dbReference>
<dbReference type="Proteomes" id="UP000233100">
    <property type="component" value="Unplaced"/>
</dbReference>
<dbReference type="GO" id="GO:0005764">
    <property type="term" value="C:lysosome"/>
    <property type="evidence" value="ECO:0000250"/>
    <property type="project" value="UniProtKB"/>
</dbReference>
<dbReference type="GO" id="GO:0004771">
    <property type="term" value="F:sterol ester esterase activity"/>
    <property type="evidence" value="ECO:0000250"/>
    <property type="project" value="UniProtKB"/>
</dbReference>
<dbReference type="GO" id="GO:0016042">
    <property type="term" value="P:lipid catabolic process"/>
    <property type="evidence" value="ECO:0007669"/>
    <property type="project" value="UniProtKB-KW"/>
</dbReference>
<dbReference type="FunFam" id="3.40.50.1820:FF:000012">
    <property type="entry name" value="Lipase"/>
    <property type="match status" value="1"/>
</dbReference>
<dbReference type="Gene3D" id="3.40.50.1820">
    <property type="entry name" value="alpha/beta hydrolase"/>
    <property type="match status" value="1"/>
</dbReference>
<dbReference type="InterPro" id="IPR000073">
    <property type="entry name" value="AB_hydrolase_1"/>
</dbReference>
<dbReference type="InterPro" id="IPR029058">
    <property type="entry name" value="AB_hydrolase_fold"/>
</dbReference>
<dbReference type="InterPro" id="IPR025483">
    <property type="entry name" value="Lipase_euk"/>
</dbReference>
<dbReference type="PANTHER" id="PTHR11005">
    <property type="entry name" value="LYSOSOMAL ACID LIPASE-RELATED"/>
    <property type="match status" value="1"/>
</dbReference>
<dbReference type="Pfam" id="PF00561">
    <property type="entry name" value="Abhydrolase_1"/>
    <property type="match status" value="1"/>
</dbReference>
<dbReference type="PIRSF" id="PIRSF000862">
    <property type="entry name" value="Steryl_ester_lip"/>
    <property type="match status" value="1"/>
</dbReference>
<dbReference type="SUPFAM" id="SSF53474">
    <property type="entry name" value="alpha/beta-Hydrolases"/>
    <property type="match status" value="1"/>
</dbReference>
<dbReference type="PROSITE" id="PS00120">
    <property type="entry name" value="LIPASE_SER"/>
    <property type="match status" value="1"/>
</dbReference>
<gene>
    <name type="primary">LIPA</name>
    <name type="ORF">QflA-10548</name>
</gene>
<accession>Q4R4S5</accession>
<protein>
    <recommendedName>
        <fullName>Lysosomal acid lipase/cholesteryl ester hydrolase</fullName>
        <shortName>Acid cholesteryl ester hydrolase</shortName>
        <shortName>LAL</shortName>
        <ecNumber evidence="1">3.1.1.13</ecNumber>
    </recommendedName>
    <alternativeName>
        <fullName>Cholesteryl esterase</fullName>
    </alternativeName>
    <alternativeName>
        <fullName>Diacylglycerol lipase</fullName>
    </alternativeName>
    <alternativeName>
        <fullName>Lipase A</fullName>
    </alternativeName>
    <alternativeName>
        <fullName>Sterol esterase</fullName>
    </alternativeName>
    <alternativeName>
        <fullName>Triacylglycerol ester hydrolase</fullName>
    </alternativeName>
    <alternativeName>
        <fullName>Triacylglycerol lipase</fullName>
    </alternativeName>
</protein>
<feature type="signal peptide" evidence="1">
    <location>
        <begin position="1"/>
        <end position="27"/>
    </location>
</feature>
<feature type="propeptide" id="PRO_0000450226" description="Removed in mature form" evidence="1">
    <location>
        <begin position="28"/>
        <end position="76"/>
    </location>
</feature>
<feature type="chain" id="PRO_0000237614" description="Lysosomal acid lipase/cholesteryl ester hydrolase">
    <location>
        <begin position="77"/>
        <end position="399"/>
    </location>
</feature>
<feature type="domain" description="AB hydrolase-1" evidence="3">
    <location>
        <begin position="80"/>
        <end position="380"/>
    </location>
</feature>
<feature type="active site" description="Charge relay system" evidence="4">
    <location>
        <position position="174"/>
    </location>
</feature>
<feature type="active site" description="Charge relay system" evidence="4">
    <location>
        <position position="374"/>
    </location>
</feature>
<feature type="glycosylation site" description="N-linked (GlcNAc...) asparagine" evidence="3">
    <location>
        <position position="36"/>
    </location>
</feature>
<feature type="glycosylation site" description="N-linked (GlcNAc...) asparagine" evidence="3">
    <location>
        <position position="72"/>
    </location>
</feature>
<feature type="glycosylation site" description="N-linked (GlcNAc...) asparagine" evidence="3">
    <location>
        <position position="101"/>
    </location>
</feature>
<feature type="glycosylation site" description="N-linked (GlcNAc...) asparagine" evidence="3">
    <location>
        <position position="161"/>
    </location>
</feature>
<feature type="glycosylation site" description="N-linked (GlcNAc...) asparagine" evidence="3">
    <location>
        <position position="273"/>
    </location>
</feature>
<feature type="glycosylation site" description="N-linked (GlcNAc...) asparagine" evidence="3">
    <location>
        <position position="321"/>
    </location>
</feature>